<proteinExistence type="inferred from homology"/>
<gene>
    <name evidence="1" type="primary">rimM</name>
    <name type="ordered locus">PFL_1095</name>
</gene>
<evidence type="ECO:0000255" key="1">
    <source>
        <dbReference type="HAMAP-Rule" id="MF_00014"/>
    </source>
</evidence>
<protein>
    <recommendedName>
        <fullName evidence="1">Ribosome maturation factor RimM</fullName>
    </recommendedName>
</protein>
<name>RIMM_PSEF5</name>
<keyword id="KW-0143">Chaperone</keyword>
<keyword id="KW-0963">Cytoplasm</keyword>
<keyword id="KW-0690">Ribosome biogenesis</keyword>
<keyword id="KW-0698">rRNA processing</keyword>
<sequence>MNATPAPADDLIVIGKIYSVHGVRGEVKVFSFTDPIKNLLDYKTWTLKREGSVKQVELVSGRGNDKFLVAKLKGLDDREEARLLAGYEICVPRSLFPELTDGEYYWYQLQGLKVIDGLGQLLGKIDHLLETGSNDVMVVKPCAGSLDDRERLLPYTEQCVLAVDLAAGEMKVEWDADF</sequence>
<reference key="1">
    <citation type="journal article" date="2005" name="Nat. Biotechnol.">
        <title>Complete genome sequence of the plant commensal Pseudomonas fluorescens Pf-5.</title>
        <authorList>
            <person name="Paulsen I.T."/>
            <person name="Press C.M."/>
            <person name="Ravel J."/>
            <person name="Kobayashi D.Y."/>
            <person name="Myers G.S.A."/>
            <person name="Mavrodi D.V."/>
            <person name="DeBoy R.T."/>
            <person name="Seshadri R."/>
            <person name="Ren Q."/>
            <person name="Madupu R."/>
            <person name="Dodson R.J."/>
            <person name="Durkin A.S."/>
            <person name="Brinkac L.M."/>
            <person name="Daugherty S.C."/>
            <person name="Sullivan S.A."/>
            <person name="Rosovitz M.J."/>
            <person name="Gwinn M.L."/>
            <person name="Zhou L."/>
            <person name="Schneider D.J."/>
            <person name="Cartinhour S.W."/>
            <person name="Nelson W.C."/>
            <person name="Weidman J."/>
            <person name="Watkins K."/>
            <person name="Tran K."/>
            <person name="Khouri H."/>
            <person name="Pierson E.A."/>
            <person name="Pierson L.S. III"/>
            <person name="Thomashow L.S."/>
            <person name="Loper J.E."/>
        </authorList>
    </citation>
    <scope>NUCLEOTIDE SEQUENCE [LARGE SCALE GENOMIC DNA]</scope>
    <source>
        <strain>ATCC BAA-477 / NRRL B-23932 / Pf-5</strain>
    </source>
</reference>
<accession>Q4KHQ7</accession>
<comment type="function">
    <text evidence="1">An accessory protein needed during the final step in the assembly of 30S ribosomal subunit, possibly for assembly of the head region. Essential for efficient processing of 16S rRNA. May be needed both before and after RbfA during the maturation of 16S rRNA. It has affinity for free ribosomal 30S subunits but not for 70S ribosomes.</text>
</comment>
<comment type="subunit">
    <text evidence="1">Binds ribosomal protein uS19.</text>
</comment>
<comment type="subcellular location">
    <subcellularLocation>
        <location evidence="1">Cytoplasm</location>
    </subcellularLocation>
</comment>
<comment type="domain">
    <text evidence="1">The PRC barrel domain binds ribosomal protein uS19.</text>
</comment>
<comment type="similarity">
    <text evidence="1">Belongs to the RimM family.</text>
</comment>
<dbReference type="EMBL" id="CP000076">
    <property type="protein sequence ID" value="AAY90382.1"/>
    <property type="molecule type" value="Genomic_DNA"/>
</dbReference>
<dbReference type="RefSeq" id="WP_011059444.1">
    <property type="nucleotide sequence ID" value="NC_004129.6"/>
</dbReference>
<dbReference type="SMR" id="Q4KHQ7"/>
<dbReference type="STRING" id="220664.PFL_1095"/>
<dbReference type="DNASU" id="3477467"/>
<dbReference type="GeneID" id="57474099"/>
<dbReference type="KEGG" id="pfl:PFL_1095"/>
<dbReference type="PATRIC" id="fig|220664.5.peg.1124"/>
<dbReference type="eggNOG" id="COG0806">
    <property type="taxonomic scope" value="Bacteria"/>
</dbReference>
<dbReference type="HOGENOM" id="CLU_077636_1_0_6"/>
<dbReference type="Proteomes" id="UP000008540">
    <property type="component" value="Chromosome"/>
</dbReference>
<dbReference type="GO" id="GO:0005737">
    <property type="term" value="C:cytoplasm"/>
    <property type="evidence" value="ECO:0007669"/>
    <property type="project" value="UniProtKB-SubCell"/>
</dbReference>
<dbReference type="GO" id="GO:0005840">
    <property type="term" value="C:ribosome"/>
    <property type="evidence" value="ECO:0007669"/>
    <property type="project" value="InterPro"/>
</dbReference>
<dbReference type="GO" id="GO:0043022">
    <property type="term" value="F:ribosome binding"/>
    <property type="evidence" value="ECO:0007669"/>
    <property type="project" value="InterPro"/>
</dbReference>
<dbReference type="GO" id="GO:0042274">
    <property type="term" value="P:ribosomal small subunit biogenesis"/>
    <property type="evidence" value="ECO:0007669"/>
    <property type="project" value="UniProtKB-UniRule"/>
</dbReference>
<dbReference type="GO" id="GO:0006364">
    <property type="term" value="P:rRNA processing"/>
    <property type="evidence" value="ECO:0007669"/>
    <property type="project" value="UniProtKB-UniRule"/>
</dbReference>
<dbReference type="Gene3D" id="2.30.30.240">
    <property type="entry name" value="PRC-barrel domain"/>
    <property type="match status" value="1"/>
</dbReference>
<dbReference type="Gene3D" id="2.40.30.60">
    <property type="entry name" value="RimM"/>
    <property type="match status" value="1"/>
</dbReference>
<dbReference type="HAMAP" id="MF_00014">
    <property type="entry name" value="Ribosome_mat_RimM"/>
    <property type="match status" value="1"/>
</dbReference>
<dbReference type="InterPro" id="IPR011033">
    <property type="entry name" value="PRC_barrel-like_sf"/>
</dbReference>
<dbReference type="InterPro" id="IPR056792">
    <property type="entry name" value="PRC_RimM"/>
</dbReference>
<dbReference type="InterPro" id="IPR011961">
    <property type="entry name" value="RimM"/>
</dbReference>
<dbReference type="InterPro" id="IPR002676">
    <property type="entry name" value="RimM_N"/>
</dbReference>
<dbReference type="InterPro" id="IPR036976">
    <property type="entry name" value="RimM_N_sf"/>
</dbReference>
<dbReference type="InterPro" id="IPR009000">
    <property type="entry name" value="Transl_B-barrel_sf"/>
</dbReference>
<dbReference type="NCBIfam" id="TIGR02273">
    <property type="entry name" value="16S_RimM"/>
    <property type="match status" value="1"/>
</dbReference>
<dbReference type="PANTHER" id="PTHR33692">
    <property type="entry name" value="RIBOSOME MATURATION FACTOR RIMM"/>
    <property type="match status" value="1"/>
</dbReference>
<dbReference type="PANTHER" id="PTHR33692:SF1">
    <property type="entry name" value="RIBOSOME MATURATION FACTOR RIMM"/>
    <property type="match status" value="1"/>
</dbReference>
<dbReference type="Pfam" id="PF24986">
    <property type="entry name" value="PRC_RimM"/>
    <property type="match status" value="1"/>
</dbReference>
<dbReference type="Pfam" id="PF01782">
    <property type="entry name" value="RimM"/>
    <property type="match status" value="1"/>
</dbReference>
<dbReference type="SUPFAM" id="SSF50346">
    <property type="entry name" value="PRC-barrel domain"/>
    <property type="match status" value="1"/>
</dbReference>
<dbReference type="SUPFAM" id="SSF50447">
    <property type="entry name" value="Translation proteins"/>
    <property type="match status" value="1"/>
</dbReference>
<organism>
    <name type="scientific">Pseudomonas fluorescens (strain ATCC BAA-477 / NRRL B-23932 / Pf-5)</name>
    <dbReference type="NCBI Taxonomy" id="220664"/>
    <lineage>
        <taxon>Bacteria</taxon>
        <taxon>Pseudomonadati</taxon>
        <taxon>Pseudomonadota</taxon>
        <taxon>Gammaproteobacteria</taxon>
        <taxon>Pseudomonadales</taxon>
        <taxon>Pseudomonadaceae</taxon>
        <taxon>Pseudomonas</taxon>
    </lineage>
</organism>
<feature type="chain" id="PRO_0000244148" description="Ribosome maturation factor RimM">
    <location>
        <begin position="1"/>
        <end position="178"/>
    </location>
</feature>
<feature type="domain" description="PRC barrel" evidence="1">
    <location>
        <begin position="101"/>
        <end position="178"/>
    </location>
</feature>